<name>VP2_POVMA</name>
<comment type="function">
    <molecule>Isoform VP2</molecule>
    <text evidence="1">Structural protein that resides within the core of the capsid surrounded by 72 VP1 pentamers. Participates in host cell receptor binding together with VP1. Following virus endocytosis and trafficking to the endoplasmic reticulum, VP2 and VP3 form oligomers and integrate into the endoplasmic reticulum membrane. Heterooligomer VP2-VP3 may create a viroporin for transporting the viral genome across the endoplasmic reticulum membrane to the cytoplasm. Nuclear entry of the viral DNA involves the selective exposure and importin recognition of VP2 or VP3 nuclear localization signal (shared C-terminus). Plays a role in virion assembly within the nucleus in particular through a DNA-binding domain located in the C-terminal region. A N-terminal myristoylation suggests a scaffold function for virion assembly (By similarity).</text>
</comment>
<comment type="function">
    <molecule>Isoform VP3</molecule>
    <text evidence="1">Structural protein that resides within the core of the capsid surrounded by 72 VP1 pentamers. Following virus endocytosis and trafficking to the endoplasmic reticulum, VP2 and VP3 form oligomers and integrate into the endoplasmic reticulum membrane. Heterooligomer VP2-VP3 may create a viroporin for transporting the viral genome across the endoplasmic reticulum membrane to the cytoplasm. Nuclear entry of the viral DNA involves the selective exposure and importin recognition of VP2 or VP3 nuclear localization signal (shared C-terminus). Plays a role in virion assembly within the nucleus (By similarity).</text>
</comment>
<comment type="subunit">
    <molecule>Isoform VP2</molecule>
    <text evidence="1">Forms homooligomers, and heterooligomers with VP3 in the endoplasmic reticulum membrane. Interacts (via D1 domain) with VP1.</text>
</comment>
<comment type="subunit">
    <molecule>Isoform VP3</molecule>
    <text>Interacts (via D1 domain) with VP1.</text>
</comment>
<comment type="subcellular location">
    <molecule>Isoform VP2</molecule>
    <subcellularLocation>
        <location>Virion</location>
    </subcellularLocation>
    <subcellularLocation>
        <location>Host nucleus</location>
    </subcellularLocation>
    <subcellularLocation>
        <location>Host endoplasmic reticulum</location>
    </subcellularLocation>
    <subcellularLocation>
        <location evidence="1">Host endoplasmic reticulum membrane</location>
    </subcellularLocation>
</comment>
<comment type="subcellular location">
    <molecule>Isoform VP3</molecule>
    <subcellularLocation>
        <location>Virion</location>
    </subcellularLocation>
    <subcellularLocation>
        <location>Host nucleus</location>
    </subcellularLocation>
    <subcellularLocation>
        <location>Host endoplasmic reticulum</location>
    </subcellularLocation>
    <subcellularLocation>
        <location evidence="1">Host endoplasmic reticulum membrane</location>
    </subcellularLocation>
</comment>
<comment type="alternative products">
    <event type="alternative splicing"/>
    <event type="alternative initiation"/>
    <isoform>
        <id>P03096-1</id>
        <name>VP2</name>
        <name>Minor capsid protein VP2</name>
        <sequence type="displayed"/>
    </isoform>
    <isoform>
        <id>P03096-2</id>
        <name>VP3</name>
        <name>Minor capsid protein VP3</name>
        <sequence type="described" ref="VSP_018922"/>
    </isoform>
    <isoform>
        <id>P03090-1</id>
        <name>VP1</name>
        <sequence type="external"/>
    </isoform>
</comment>
<comment type="miscellaneous">
    <molecule>Isoform VP2</molecule>
    <text>Produced by alternative splicing of the late mRNA.</text>
</comment>
<comment type="miscellaneous">
    <molecule>Isoform VP3</molecule>
    <text evidence="4">Produced by alternative initiation at Met-116 of isoform VP2.</text>
</comment>
<comment type="similarity">
    <text evidence="4">Belongs to the polyomaviruses capsid protein VP2 family.</text>
</comment>
<sequence length="319" mass="34801">MGAALTILVDLIEGLAEVSTLTGLSAEAILSGEALAALDGEITALTLEGVMSSETALATMGISEEVYGFVSTVPVFVSRTAGAIWLMQTVQGASTISLGIQRYLHNEEVPTVNRNMALIPWRDPALLDIYFPGVNQFAHALNVVHDWGHGLLHSVGRYVWQMVVQETQHRLEGAVRELTVRQTHTFLDGLARLLENTRWVVSNAPQSAIDAINRGASSASSGYSSLSDYYRQLGLNPPQRRALFNRIEGSMGNGGPTPAAHIQDESGEVIKFYQAQVVSHQRVTPDWMLPLILGLYGDITPTWATVIEEDGPQKKKRRL</sequence>
<keyword id="KW-0024">Alternative initiation</keyword>
<keyword id="KW-0025">Alternative splicing</keyword>
<keyword id="KW-0167">Capsid protein</keyword>
<keyword id="KW-0238">DNA-binding</keyword>
<keyword id="KW-1038">Host endoplasmic reticulum</keyword>
<keyword id="KW-1043">Host membrane</keyword>
<keyword id="KW-1048">Host nucleus</keyword>
<keyword id="KW-0426">Late protein</keyword>
<keyword id="KW-0449">Lipoprotein</keyword>
<keyword id="KW-0472">Membrane</keyword>
<keyword id="KW-0519">Myristate</keyword>
<keyword id="KW-1185">Reference proteome</keyword>
<keyword id="KW-0812">Transmembrane</keyword>
<keyword id="KW-1133">Transmembrane helix</keyword>
<keyword id="KW-1163">Viral penetration into host nucleus</keyword>
<keyword id="KW-0946">Virion</keyword>
<keyword id="KW-1160">Virus entry into host cell</keyword>
<organism>
    <name type="scientific">Murine polyomavirus (strain A2)</name>
    <name type="common">MPyV</name>
    <dbReference type="NCBI Taxonomy" id="10636"/>
    <lineage>
        <taxon>Viruses</taxon>
        <taxon>Monodnaviria</taxon>
        <taxon>Shotokuvirae</taxon>
        <taxon>Cossaviricota</taxon>
        <taxon>Papovaviricetes</taxon>
        <taxon>Sepolyvirales</taxon>
        <taxon>Polyomaviridae</taxon>
        <taxon>Alphapolyomavirus</taxon>
        <taxon>Mus musculus polyomavirus 1</taxon>
    </lineage>
</organism>
<reference key="1">
    <citation type="journal article" date="1980" name="Nature">
        <title>Coding potential and regulatory signals of the polyoma virus genome.</title>
        <authorList>
            <person name="Soeda E."/>
            <person name="Arrand J.R."/>
            <person name="Smolar N."/>
            <person name="Walsh J.E."/>
            <person name="Griffin B.E."/>
        </authorList>
    </citation>
    <scope>NUCLEOTIDE SEQUENCE [GENOMIC DNA]</scope>
</reference>
<reference key="2">
    <citation type="journal article" date="1980" name="J. Virol.">
        <title>Polyoma virus DNA: Sequence from the late region that specifies the leader sequence for late mRNA and codes for VP2, VP3, and the N-terminus of VP1.</title>
        <authorList>
            <person name="Arrand J.R."/>
            <person name="Soeda E."/>
            <person name="Walsh J.E."/>
            <person name="Smolar N."/>
            <person name="Griffin B.E."/>
        </authorList>
    </citation>
    <scope>NUCLEOTIDE SEQUENCE [GENOMIC DNA]</scope>
</reference>
<reference key="3">
    <citation type="journal article" date="1980" name="J. Virol.">
        <title>Polyoma virus DNA: complete nucleotide sequence of the gene which codes for polyoma virus capsid protein VP1 and overlaps the VP2/VP3 genes.</title>
        <authorList>
            <person name="Soeda E."/>
            <person name="Arrand J.R."/>
            <person name="Griffin B.E."/>
        </authorList>
    </citation>
    <scope>NUCLEOTIDE SEQUENCE [GENOMIC DNA] OF 283-319</scope>
</reference>
<reference key="4">
    <citation type="journal article" date="1987" name="Nature">
        <title>Myristic acid is coupled to a structural protein of polyoma virus and SV40.</title>
        <authorList>
            <person name="Streuli C.H."/>
            <person name="Griffin B.E."/>
        </authorList>
    </citation>
    <scope>MYRISTOYLATION AT GLY-2</scope>
    <scope>SUBCELLULAR LOCATION</scope>
</reference>
<reference key="5">
    <citation type="journal article" date="2009" name="Virology">
        <title>The Polyomaviridae: Contributions of virus structure to our understanding of virus receptors and infectious entry.</title>
        <authorList>
            <person name="Neu U."/>
            <person name="Stehle T."/>
            <person name="Atwood W.J."/>
        </authorList>
    </citation>
    <scope>REVIEW</scope>
</reference>
<feature type="initiator methionine" description="Removed; by host">
    <location>
        <position position="1"/>
    </location>
</feature>
<feature type="chain" id="PRO_0000039217" description="Minor capsid protein VP2">
    <location>
        <begin position="2"/>
        <end position="319"/>
    </location>
</feature>
<feature type="transmembrane region" description="Helical" evidence="2">
    <location>
        <begin position="287"/>
        <end position="307"/>
    </location>
</feature>
<feature type="region of interest" description="D1" evidence="1">
    <location>
        <begin position="266"/>
        <end position="301"/>
    </location>
</feature>
<feature type="region of interest" description="DNA-binding" evidence="1">
    <location>
        <begin position="306"/>
        <end position="319"/>
    </location>
</feature>
<feature type="short sequence motif" description="Nuclear localization signal" evidence="1">
    <location>
        <begin position="311"/>
        <end position="319"/>
    </location>
</feature>
<feature type="lipid moiety-binding region" description="N-myristoyl glycine; by host" evidence="3">
    <location>
        <position position="2"/>
    </location>
</feature>
<feature type="splice variant" id="VSP_018922" description="In isoform VP3." evidence="4">
    <location>
        <begin position="1"/>
        <end position="115"/>
    </location>
</feature>
<dbReference type="EMBL" id="J02288">
    <property type="protein sequence ID" value="AAB59903.1"/>
    <property type="molecule type" value="Genomic_DNA"/>
</dbReference>
<dbReference type="EMBL" id="J02288">
    <property type="protein sequence ID" value="AAB59904.1"/>
    <property type="molecule type" value="Genomic_DNA"/>
</dbReference>
<dbReference type="PIR" id="A03635">
    <property type="entry name" value="VVVP2"/>
</dbReference>
<dbReference type="DIP" id="DIP-1089N"/>
<dbReference type="IntAct" id="P03096">
    <property type="interactions" value="2"/>
</dbReference>
<dbReference type="MINT" id="P03096"/>
<dbReference type="iPTMnet" id="P03096"/>
<dbReference type="Proteomes" id="UP000008479">
    <property type="component" value="Genome"/>
</dbReference>
<dbReference type="GO" id="GO:0043657">
    <property type="term" value="C:host cell"/>
    <property type="evidence" value="ECO:0007669"/>
    <property type="project" value="GOC"/>
</dbReference>
<dbReference type="GO" id="GO:0044167">
    <property type="term" value="C:host cell endoplasmic reticulum membrane"/>
    <property type="evidence" value="ECO:0007669"/>
    <property type="project" value="UniProtKB-SubCell"/>
</dbReference>
<dbReference type="GO" id="GO:0042025">
    <property type="term" value="C:host cell nucleus"/>
    <property type="evidence" value="ECO:0007669"/>
    <property type="project" value="UniProtKB-SubCell"/>
</dbReference>
<dbReference type="GO" id="GO:0016020">
    <property type="term" value="C:membrane"/>
    <property type="evidence" value="ECO:0007669"/>
    <property type="project" value="UniProtKB-KW"/>
</dbReference>
<dbReference type="GO" id="GO:0019028">
    <property type="term" value="C:viral capsid"/>
    <property type="evidence" value="ECO:0007669"/>
    <property type="project" value="UniProtKB-KW"/>
</dbReference>
<dbReference type="GO" id="GO:0003677">
    <property type="term" value="F:DNA binding"/>
    <property type="evidence" value="ECO:0007669"/>
    <property type="project" value="UniProtKB-KW"/>
</dbReference>
<dbReference type="GO" id="GO:0005198">
    <property type="term" value="F:structural molecule activity"/>
    <property type="evidence" value="ECO:0007669"/>
    <property type="project" value="InterPro"/>
</dbReference>
<dbReference type="GO" id="GO:0046718">
    <property type="term" value="P:symbiont entry into host cell"/>
    <property type="evidence" value="ECO:0007669"/>
    <property type="project" value="UniProtKB-KW"/>
</dbReference>
<dbReference type="GO" id="GO:0075732">
    <property type="term" value="P:viral penetration into host nucleus"/>
    <property type="evidence" value="ECO:0007669"/>
    <property type="project" value="UniProtKB-KW"/>
</dbReference>
<dbReference type="InterPro" id="IPR001070">
    <property type="entry name" value="Polyoma_coat_VP2"/>
</dbReference>
<dbReference type="Pfam" id="PF00761">
    <property type="entry name" value="Polyoma_coat2"/>
    <property type="match status" value="1"/>
</dbReference>
<dbReference type="PIRSF" id="PIRSF003377">
    <property type="entry name" value="Polyoma_coat2"/>
    <property type="match status" value="1"/>
</dbReference>
<proteinExistence type="evidence at protein level"/>
<protein>
    <recommendedName>
        <fullName>Minor capsid protein VP2</fullName>
    </recommendedName>
    <alternativeName>
        <fullName>Minor structural protein VP2</fullName>
    </alternativeName>
</protein>
<accession>P03096</accession>
<accession>Q85070</accession>
<evidence type="ECO:0000250" key="1"/>
<evidence type="ECO:0000255" key="2"/>
<evidence type="ECO:0000269" key="3">
    <source>
    </source>
</evidence>
<evidence type="ECO:0000305" key="4"/>
<organismHost>
    <name type="scientific">Mus musculus</name>
    <name type="common">Mouse</name>
    <dbReference type="NCBI Taxonomy" id="10090"/>
</organismHost>